<feature type="chain" id="PRO_0000374264" description="tRNA-2-methylthio-N(6)-dimethylallyladenosine synthase">
    <location>
        <begin position="1"/>
        <end position="447"/>
    </location>
</feature>
<feature type="domain" description="MTTase N-terminal" evidence="1">
    <location>
        <begin position="4"/>
        <end position="120"/>
    </location>
</feature>
<feature type="domain" description="Radical SAM core" evidence="2">
    <location>
        <begin position="147"/>
        <end position="382"/>
    </location>
</feature>
<feature type="domain" description="TRAM" evidence="1">
    <location>
        <begin position="385"/>
        <end position="446"/>
    </location>
</feature>
<feature type="binding site" evidence="1">
    <location>
        <position position="13"/>
    </location>
    <ligand>
        <name>[4Fe-4S] cluster</name>
        <dbReference type="ChEBI" id="CHEBI:49883"/>
        <label>1</label>
    </ligand>
</feature>
<feature type="binding site" evidence="1">
    <location>
        <position position="49"/>
    </location>
    <ligand>
        <name>[4Fe-4S] cluster</name>
        <dbReference type="ChEBI" id="CHEBI:49883"/>
        <label>1</label>
    </ligand>
</feature>
<feature type="binding site" evidence="1">
    <location>
        <position position="83"/>
    </location>
    <ligand>
        <name>[4Fe-4S] cluster</name>
        <dbReference type="ChEBI" id="CHEBI:49883"/>
        <label>1</label>
    </ligand>
</feature>
<feature type="binding site" evidence="1">
    <location>
        <position position="161"/>
    </location>
    <ligand>
        <name>[4Fe-4S] cluster</name>
        <dbReference type="ChEBI" id="CHEBI:49883"/>
        <label>2</label>
        <note>4Fe-4S-S-AdoMet</note>
    </ligand>
</feature>
<feature type="binding site" evidence="1">
    <location>
        <position position="165"/>
    </location>
    <ligand>
        <name>[4Fe-4S] cluster</name>
        <dbReference type="ChEBI" id="CHEBI:49883"/>
        <label>2</label>
        <note>4Fe-4S-S-AdoMet</note>
    </ligand>
</feature>
<feature type="binding site" evidence="1">
    <location>
        <position position="168"/>
    </location>
    <ligand>
        <name>[4Fe-4S] cluster</name>
        <dbReference type="ChEBI" id="CHEBI:49883"/>
        <label>2</label>
        <note>4Fe-4S-S-AdoMet</note>
    </ligand>
</feature>
<gene>
    <name evidence="1" type="primary">miaB</name>
    <name type="ordered locus">DP1927</name>
</gene>
<organism>
    <name type="scientific">Desulfotalea psychrophila (strain LSv54 / DSM 12343)</name>
    <dbReference type="NCBI Taxonomy" id="177439"/>
    <lineage>
        <taxon>Bacteria</taxon>
        <taxon>Pseudomonadati</taxon>
        <taxon>Thermodesulfobacteriota</taxon>
        <taxon>Desulfobulbia</taxon>
        <taxon>Desulfobulbales</taxon>
        <taxon>Desulfocapsaceae</taxon>
        <taxon>Desulfotalea</taxon>
    </lineage>
</organism>
<dbReference type="EC" id="2.8.4.3" evidence="1"/>
<dbReference type="EMBL" id="CR522870">
    <property type="protein sequence ID" value="CAG36656.1"/>
    <property type="molecule type" value="Genomic_DNA"/>
</dbReference>
<dbReference type="RefSeq" id="WP_011189168.1">
    <property type="nucleotide sequence ID" value="NC_006138.1"/>
</dbReference>
<dbReference type="SMR" id="Q6ALW9"/>
<dbReference type="STRING" id="177439.DP1927"/>
<dbReference type="KEGG" id="dps:DP1927"/>
<dbReference type="eggNOG" id="COG0621">
    <property type="taxonomic scope" value="Bacteria"/>
</dbReference>
<dbReference type="HOGENOM" id="CLU_018697_2_2_7"/>
<dbReference type="OrthoDB" id="9805215at2"/>
<dbReference type="Proteomes" id="UP000000602">
    <property type="component" value="Chromosome"/>
</dbReference>
<dbReference type="GO" id="GO:0005829">
    <property type="term" value="C:cytosol"/>
    <property type="evidence" value="ECO:0007669"/>
    <property type="project" value="TreeGrafter"/>
</dbReference>
<dbReference type="GO" id="GO:0051539">
    <property type="term" value="F:4 iron, 4 sulfur cluster binding"/>
    <property type="evidence" value="ECO:0007669"/>
    <property type="project" value="UniProtKB-UniRule"/>
</dbReference>
<dbReference type="GO" id="GO:0046872">
    <property type="term" value="F:metal ion binding"/>
    <property type="evidence" value="ECO:0007669"/>
    <property type="project" value="UniProtKB-KW"/>
</dbReference>
<dbReference type="GO" id="GO:0035597">
    <property type="term" value="F:N6-isopentenyladenosine methylthiotransferase activity"/>
    <property type="evidence" value="ECO:0007669"/>
    <property type="project" value="TreeGrafter"/>
</dbReference>
<dbReference type="CDD" id="cd01335">
    <property type="entry name" value="Radical_SAM"/>
    <property type="match status" value="1"/>
</dbReference>
<dbReference type="FunFam" id="3.40.50.12160:FF:000003">
    <property type="entry name" value="CDK5 regulatory subunit-associated protein 1"/>
    <property type="match status" value="1"/>
</dbReference>
<dbReference type="FunFam" id="3.80.30.20:FF:000001">
    <property type="entry name" value="tRNA-2-methylthio-N(6)-dimethylallyladenosine synthase 2"/>
    <property type="match status" value="1"/>
</dbReference>
<dbReference type="Gene3D" id="3.40.50.12160">
    <property type="entry name" value="Methylthiotransferase, N-terminal domain"/>
    <property type="match status" value="1"/>
</dbReference>
<dbReference type="Gene3D" id="3.80.30.20">
    <property type="entry name" value="tm_1862 like domain"/>
    <property type="match status" value="1"/>
</dbReference>
<dbReference type="HAMAP" id="MF_01864">
    <property type="entry name" value="tRNA_metthiotr_MiaB"/>
    <property type="match status" value="1"/>
</dbReference>
<dbReference type="InterPro" id="IPR006638">
    <property type="entry name" value="Elp3/MiaA/NifB-like_rSAM"/>
</dbReference>
<dbReference type="InterPro" id="IPR005839">
    <property type="entry name" value="Methylthiotransferase"/>
</dbReference>
<dbReference type="InterPro" id="IPR020612">
    <property type="entry name" value="Methylthiotransferase_CS"/>
</dbReference>
<dbReference type="InterPro" id="IPR013848">
    <property type="entry name" value="Methylthiotransferase_N"/>
</dbReference>
<dbReference type="InterPro" id="IPR038135">
    <property type="entry name" value="Methylthiotransferase_N_sf"/>
</dbReference>
<dbReference type="InterPro" id="IPR006463">
    <property type="entry name" value="MiaB_methiolase"/>
</dbReference>
<dbReference type="InterPro" id="IPR007197">
    <property type="entry name" value="rSAM"/>
</dbReference>
<dbReference type="InterPro" id="IPR023404">
    <property type="entry name" value="rSAM_horseshoe"/>
</dbReference>
<dbReference type="InterPro" id="IPR002792">
    <property type="entry name" value="TRAM_dom"/>
</dbReference>
<dbReference type="NCBIfam" id="TIGR01574">
    <property type="entry name" value="miaB-methiolase"/>
    <property type="match status" value="1"/>
</dbReference>
<dbReference type="NCBIfam" id="TIGR00089">
    <property type="entry name" value="MiaB/RimO family radical SAM methylthiotransferase"/>
    <property type="match status" value="1"/>
</dbReference>
<dbReference type="PANTHER" id="PTHR43020">
    <property type="entry name" value="CDK5 REGULATORY SUBUNIT-ASSOCIATED PROTEIN 1"/>
    <property type="match status" value="1"/>
</dbReference>
<dbReference type="PANTHER" id="PTHR43020:SF2">
    <property type="entry name" value="MITOCHONDRIAL TRNA METHYLTHIOTRANSFERASE CDK5RAP1"/>
    <property type="match status" value="1"/>
</dbReference>
<dbReference type="Pfam" id="PF04055">
    <property type="entry name" value="Radical_SAM"/>
    <property type="match status" value="1"/>
</dbReference>
<dbReference type="Pfam" id="PF01938">
    <property type="entry name" value="TRAM"/>
    <property type="match status" value="1"/>
</dbReference>
<dbReference type="Pfam" id="PF00919">
    <property type="entry name" value="UPF0004"/>
    <property type="match status" value="1"/>
</dbReference>
<dbReference type="SFLD" id="SFLDF00273">
    <property type="entry name" value="(dimethylallyl)adenosine_tRNA"/>
    <property type="match status" value="1"/>
</dbReference>
<dbReference type="SFLD" id="SFLDG01082">
    <property type="entry name" value="B12-binding_domain_containing"/>
    <property type="match status" value="1"/>
</dbReference>
<dbReference type="SFLD" id="SFLDS00029">
    <property type="entry name" value="Radical_SAM"/>
    <property type="match status" value="1"/>
</dbReference>
<dbReference type="SMART" id="SM00729">
    <property type="entry name" value="Elp3"/>
    <property type="match status" value="1"/>
</dbReference>
<dbReference type="SUPFAM" id="SSF102114">
    <property type="entry name" value="Radical SAM enzymes"/>
    <property type="match status" value="1"/>
</dbReference>
<dbReference type="PROSITE" id="PS51449">
    <property type="entry name" value="MTTASE_N"/>
    <property type="match status" value="1"/>
</dbReference>
<dbReference type="PROSITE" id="PS01278">
    <property type="entry name" value="MTTASE_RADICAL"/>
    <property type="match status" value="1"/>
</dbReference>
<dbReference type="PROSITE" id="PS51918">
    <property type="entry name" value="RADICAL_SAM"/>
    <property type="match status" value="1"/>
</dbReference>
<dbReference type="PROSITE" id="PS50926">
    <property type="entry name" value="TRAM"/>
    <property type="match status" value="1"/>
</dbReference>
<comment type="function">
    <text evidence="1">Catalyzes the methylthiolation of N6-(dimethylallyl)adenosine (i(6)A), leading to the formation of 2-methylthio-N6-(dimethylallyl)adenosine (ms(2)i(6)A) at position 37 in tRNAs that read codons beginning with uridine.</text>
</comment>
<comment type="catalytic activity">
    <reaction evidence="1">
        <text>N(6)-dimethylallyladenosine(37) in tRNA + (sulfur carrier)-SH + AH2 + 2 S-adenosyl-L-methionine = 2-methylsulfanyl-N(6)-dimethylallyladenosine(37) in tRNA + (sulfur carrier)-H + 5'-deoxyadenosine + L-methionine + A + S-adenosyl-L-homocysteine + 2 H(+)</text>
        <dbReference type="Rhea" id="RHEA:37067"/>
        <dbReference type="Rhea" id="RHEA-COMP:10375"/>
        <dbReference type="Rhea" id="RHEA-COMP:10376"/>
        <dbReference type="Rhea" id="RHEA-COMP:14737"/>
        <dbReference type="Rhea" id="RHEA-COMP:14739"/>
        <dbReference type="ChEBI" id="CHEBI:13193"/>
        <dbReference type="ChEBI" id="CHEBI:15378"/>
        <dbReference type="ChEBI" id="CHEBI:17319"/>
        <dbReference type="ChEBI" id="CHEBI:17499"/>
        <dbReference type="ChEBI" id="CHEBI:29917"/>
        <dbReference type="ChEBI" id="CHEBI:57844"/>
        <dbReference type="ChEBI" id="CHEBI:57856"/>
        <dbReference type="ChEBI" id="CHEBI:59789"/>
        <dbReference type="ChEBI" id="CHEBI:64428"/>
        <dbReference type="ChEBI" id="CHEBI:74415"/>
        <dbReference type="ChEBI" id="CHEBI:74417"/>
        <dbReference type="EC" id="2.8.4.3"/>
    </reaction>
</comment>
<comment type="cofactor">
    <cofactor evidence="1">
        <name>[4Fe-4S] cluster</name>
        <dbReference type="ChEBI" id="CHEBI:49883"/>
    </cofactor>
    <text evidence="1">Binds 2 [4Fe-4S] clusters. One cluster is coordinated with 3 cysteines and an exchangeable S-adenosyl-L-methionine.</text>
</comment>
<comment type="subunit">
    <text evidence="1">Monomer.</text>
</comment>
<comment type="subcellular location">
    <subcellularLocation>
        <location evidence="1">Cytoplasm</location>
    </subcellularLocation>
</comment>
<comment type="similarity">
    <text evidence="1">Belongs to the methylthiotransferase family. MiaB subfamily.</text>
</comment>
<evidence type="ECO:0000255" key="1">
    <source>
        <dbReference type="HAMAP-Rule" id="MF_01864"/>
    </source>
</evidence>
<evidence type="ECO:0000255" key="2">
    <source>
        <dbReference type="PROSITE-ProRule" id="PRU01266"/>
    </source>
</evidence>
<reference key="1">
    <citation type="journal article" date="2004" name="Environ. Microbiol.">
        <title>The genome of Desulfotalea psychrophila, a sulfate-reducing bacterium from permanently cold Arctic sediments.</title>
        <authorList>
            <person name="Rabus R."/>
            <person name="Ruepp A."/>
            <person name="Frickey T."/>
            <person name="Rattei T."/>
            <person name="Fartmann B."/>
            <person name="Stark M."/>
            <person name="Bauer M."/>
            <person name="Zibat A."/>
            <person name="Lombardot T."/>
            <person name="Becker I."/>
            <person name="Amann J."/>
            <person name="Gellner K."/>
            <person name="Teeling H."/>
            <person name="Leuschner W.D."/>
            <person name="Gloeckner F.-O."/>
            <person name="Lupas A.N."/>
            <person name="Amann R."/>
            <person name="Klenk H.-P."/>
        </authorList>
    </citation>
    <scope>NUCLEOTIDE SEQUENCE [LARGE SCALE GENOMIC DNA]</scope>
    <source>
        <strain>DSM 12343 / LSv54</strain>
    </source>
</reference>
<protein>
    <recommendedName>
        <fullName evidence="1">tRNA-2-methylthio-N(6)-dimethylallyladenosine synthase</fullName>
        <ecNumber evidence="1">2.8.4.3</ecNumber>
    </recommendedName>
    <alternativeName>
        <fullName evidence="1">(Dimethylallyl)adenosine tRNA methylthiotransferase MiaB</fullName>
    </alternativeName>
    <alternativeName>
        <fullName evidence="1">tRNA-i(6)A37 methylthiotransferase</fullName>
    </alternativeName>
</protein>
<name>MIAB_DESPS</name>
<keyword id="KW-0004">4Fe-4S</keyword>
<keyword id="KW-0963">Cytoplasm</keyword>
<keyword id="KW-0408">Iron</keyword>
<keyword id="KW-0411">Iron-sulfur</keyword>
<keyword id="KW-0479">Metal-binding</keyword>
<keyword id="KW-1185">Reference proteome</keyword>
<keyword id="KW-0949">S-adenosyl-L-methionine</keyword>
<keyword id="KW-0808">Transferase</keyword>
<keyword id="KW-0819">tRNA processing</keyword>
<proteinExistence type="inferred from homology"/>
<accession>Q6ALW9</accession>
<sequence>MEQRSFFIKTYGCQMNLRDSEIIAQILNNNGYVETSEIGGADLVLLNTCSIRAKAEQKVMSKLGELRRNKKINPRMQICVAGCVAQQEGKQIQAKMPHVDLVIGTQYIYAINELLERSRTEGPITATNLDDKYVIPQFIPETTGKEHEGEFRKFVTIMQGCNNFCTYCVVPYTRGREVSRSIKDIVEEITVLVKSGIKEITLLGQNVNSYAQTNTVTEDDTPATFSDLLRQVAAVEGLKRLRFTTSNPKDLSNDLMQCFKDLDVLCPQFHLPVQAGSNKVLKEMGRKYTVESYLDLVTQLRENCPEIAITTDIIVGFPGETDEEFEETMKMLETVRYHGSFSFKYSDRPGTKANELTNKVDESVKSARLARFQARQDEIGLERNQEYIGTTQEVLIEELRDGEIKGRMGTNHIVHAIGLTNKKPGDFLMAHVTAAGQHSLRGSIVEE</sequence>